<proteinExistence type="evidence at protein level"/>
<sequence length="265" mass="29486">MLLAAVSLGLLLLAFLLLLRHLGWGLVAIGWFEFVQQPVHNLLMGGTKEQRILRHVQQHAKPGDPQSVLEAIDTYCSEKEWAMNVGDAKGQIMDAVIREYRPSLVLELGAYCGYSAVRMARLLPPGARLLTMEINPDYAAITQQMLDFAGLQDKVSILIGASQDLIPQLKKKYDVDTLDMVFLDHWKDRYLPDTLLLEECGLLRKGTVLLADNVIVPGTPDFLAYVRGSSSFECTHYSSYLEYMKVVDGLEKAVYQGPGSSPVKS</sequence>
<keyword id="KW-0002">3D-structure</keyword>
<keyword id="KW-0024">Alternative initiation</keyword>
<keyword id="KW-0128">Catecholamine metabolism</keyword>
<keyword id="KW-1003">Cell membrane</keyword>
<keyword id="KW-0963">Cytoplasm</keyword>
<keyword id="KW-0443">Lipid metabolism</keyword>
<keyword id="KW-0460">Magnesium</keyword>
<keyword id="KW-0472">Membrane</keyword>
<keyword id="KW-0479">Metal-binding</keyword>
<keyword id="KW-0489">Methyltransferase</keyword>
<keyword id="KW-0531">Neurotransmitter degradation</keyword>
<keyword id="KW-0597">Phosphoprotein</keyword>
<keyword id="KW-1185">Reference proteome</keyword>
<keyword id="KW-0949">S-adenosyl-L-methionine</keyword>
<keyword id="KW-0735">Signal-anchor</keyword>
<keyword id="KW-0808">Transferase</keyword>
<keyword id="KW-0812">Transmembrane</keyword>
<keyword id="KW-1133">Transmembrane helix</keyword>
<organism>
    <name type="scientific">Mus musculus</name>
    <name type="common">Mouse</name>
    <dbReference type="NCBI Taxonomy" id="10090"/>
    <lineage>
        <taxon>Eukaryota</taxon>
        <taxon>Metazoa</taxon>
        <taxon>Chordata</taxon>
        <taxon>Craniata</taxon>
        <taxon>Vertebrata</taxon>
        <taxon>Euteleostomi</taxon>
        <taxon>Mammalia</taxon>
        <taxon>Eutheria</taxon>
        <taxon>Euarchontoglires</taxon>
        <taxon>Glires</taxon>
        <taxon>Rodentia</taxon>
        <taxon>Myomorpha</taxon>
        <taxon>Muroidea</taxon>
        <taxon>Muridae</taxon>
        <taxon>Murinae</taxon>
        <taxon>Mus</taxon>
        <taxon>Mus</taxon>
    </lineage>
</organism>
<gene>
    <name evidence="8" type="primary">Comt</name>
    <name type="synonym">Comt1</name>
</gene>
<protein>
    <recommendedName>
        <fullName evidence="7">Catechol O-methyltransferase</fullName>
        <ecNumber evidence="2">2.1.1.6</ecNumber>
    </recommendedName>
</protein>
<name>COMT_MOUSE</name>
<evidence type="ECO:0000250" key="1"/>
<evidence type="ECO:0000250" key="2">
    <source>
        <dbReference type="UniProtKB" id="P21964"/>
    </source>
</evidence>
<evidence type="ECO:0000250" key="3">
    <source>
        <dbReference type="UniProtKB" id="P22734"/>
    </source>
</evidence>
<evidence type="ECO:0000255" key="4"/>
<evidence type="ECO:0000255" key="5">
    <source>
        <dbReference type="PROSITE-ProRule" id="PRU01019"/>
    </source>
</evidence>
<evidence type="ECO:0000269" key="6">
    <source>
    </source>
</evidence>
<evidence type="ECO:0000305" key="7"/>
<evidence type="ECO:0000312" key="8">
    <source>
        <dbReference type="MGI" id="MGI:88470"/>
    </source>
</evidence>
<evidence type="ECO:0007744" key="9">
    <source>
    </source>
</evidence>
<evidence type="ECO:0007744" key="10">
    <source>
    </source>
</evidence>
<evidence type="ECO:0007744" key="11">
    <source>
    </source>
</evidence>
<evidence type="ECO:0007829" key="12">
    <source>
        <dbReference type="PDB" id="4P7F"/>
    </source>
</evidence>
<dbReference type="EC" id="2.1.1.6" evidence="2"/>
<dbReference type="EMBL" id="AF076156">
    <property type="protein sequence ID" value="AAC33334.1"/>
    <property type="molecule type" value="mRNA"/>
</dbReference>
<dbReference type="EMBL" id="AK148311">
    <property type="protein sequence ID" value="BAE28473.1"/>
    <property type="molecule type" value="mRNA"/>
</dbReference>
<dbReference type="EMBL" id="AC133487">
    <property type="status" value="NOT_ANNOTATED_CDS"/>
    <property type="molecule type" value="Genomic_DNA"/>
</dbReference>
<dbReference type="EMBL" id="BC010402">
    <property type="protein sequence ID" value="AAH10402.1"/>
    <property type="molecule type" value="mRNA"/>
</dbReference>
<dbReference type="CCDS" id="CCDS28021.1">
    <molecule id="O88587-1"/>
</dbReference>
<dbReference type="RefSeq" id="NP_001104532.1">
    <molecule id="O88587-1"/>
    <property type="nucleotide sequence ID" value="NM_001111062.1"/>
</dbReference>
<dbReference type="RefSeq" id="NP_001104533.1">
    <molecule id="O88587-1"/>
    <property type="nucleotide sequence ID" value="NM_001111063.1"/>
</dbReference>
<dbReference type="RefSeq" id="NP_031770.2">
    <molecule id="O88587-1"/>
    <property type="nucleotide sequence ID" value="NM_007744.3"/>
</dbReference>
<dbReference type="PDB" id="4P58">
    <property type="method" value="X-ray"/>
    <property type="resolution" value="2.06 A"/>
    <property type="chains" value="A=47-258"/>
</dbReference>
<dbReference type="PDB" id="4P7F">
    <property type="method" value="X-ray"/>
    <property type="resolution" value="1.37 A"/>
    <property type="chains" value="A=44-265"/>
</dbReference>
<dbReference type="PDBsum" id="4P58"/>
<dbReference type="PDBsum" id="4P7F"/>
<dbReference type="SMR" id="O88587"/>
<dbReference type="BioGRID" id="198834">
    <property type="interactions" value="1"/>
</dbReference>
<dbReference type="FunCoup" id="O88587">
    <property type="interactions" value="997"/>
</dbReference>
<dbReference type="STRING" id="10090.ENSMUSP00000130077"/>
<dbReference type="BindingDB" id="O88587"/>
<dbReference type="ChEMBL" id="CHEMBL3286068"/>
<dbReference type="DrugCentral" id="O88587"/>
<dbReference type="GuidetoPHARMACOLOGY" id="2472"/>
<dbReference type="GlyGen" id="O88587">
    <property type="glycosylation" value="1 site, 1 O-linked glycan (1 site)"/>
</dbReference>
<dbReference type="iPTMnet" id="O88587"/>
<dbReference type="PhosphoSitePlus" id="O88587"/>
<dbReference type="SwissPalm" id="O88587"/>
<dbReference type="jPOST" id="O88587"/>
<dbReference type="PaxDb" id="10090-ENSMUSP00000111272"/>
<dbReference type="PeptideAtlas" id="O88587"/>
<dbReference type="ProteomicsDB" id="283350">
    <molecule id="O88587-1"/>
</dbReference>
<dbReference type="ProteomicsDB" id="283351">
    <molecule id="O88587-2"/>
</dbReference>
<dbReference type="Pumba" id="O88587"/>
<dbReference type="Antibodypedia" id="213">
    <property type="antibodies" value="654 antibodies from 40 providers"/>
</dbReference>
<dbReference type="DNASU" id="12846"/>
<dbReference type="Ensembl" id="ENSMUST00000000335.12">
    <molecule id="O88587-1"/>
    <property type="protein sequence ID" value="ENSMUSP00000000335.5"/>
    <property type="gene ID" value="ENSMUSG00000000326.14"/>
</dbReference>
<dbReference type="Ensembl" id="ENSMUST00000115609.10">
    <molecule id="O88587-1"/>
    <property type="protein sequence ID" value="ENSMUSP00000111272.3"/>
    <property type="gene ID" value="ENSMUSG00000000326.14"/>
</dbReference>
<dbReference type="Ensembl" id="ENSMUST00000165430.8">
    <molecule id="O88587-1"/>
    <property type="protein sequence ID" value="ENSMUSP00000130077.2"/>
    <property type="gene ID" value="ENSMUSG00000000326.14"/>
</dbReference>
<dbReference type="GeneID" id="12846"/>
<dbReference type="KEGG" id="mmu:12846"/>
<dbReference type="UCSC" id="uc007ynu.2">
    <molecule id="O88587-1"/>
    <property type="organism name" value="mouse"/>
</dbReference>
<dbReference type="AGR" id="MGI:88470"/>
<dbReference type="CTD" id="1312"/>
<dbReference type="MGI" id="MGI:88470">
    <property type="gene designation" value="Comt"/>
</dbReference>
<dbReference type="VEuPathDB" id="HostDB:ENSMUSG00000000326"/>
<dbReference type="eggNOG" id="KOG1663">
    <property type="taxonomic scope" value="Eukaryota"/>
</dbReference>
<dbReference type="GeneTree" id="ENSGT00940000155317"/>
<dbReference type="HOGENOM" id="CLU_050461_5_0_1"/>
<dbReference type="InParanoid" id="O88587"/>
<dbReference type="OMA" id="VEITRCV"/>
<dbReference type="OrthoDB" id="186626at2759"/>
<dbReference type="PhylomeDB" id="O88587"/>
<dbReference type="TreeFam" id="TF329140"/>
<dbReference type="Reactome" id="R-MMU-156581">
    <property type="pathway name" value="Methylation"/>
</dbReference>
<dbReference type="Reactome" id="R-MMU-379397">
    <property type="pathway name" value="Enzymatic degradation of dopamine by COMT"/>
</dbReference>
<dbReference type="Reactome" id="R-MMU-379398">
    <property type="pathway name" value="Enzymatic degradation of Dopamine by monoamine oxidase"/>
</dbReference>
<dbReference type="SABIO-RK" id="O88587"/>
<dbReference type="BioGRID-ORCS" id="12846">
    <property type="hits" value="0 hits in 76 CRISPR screens"/>
</dbReference>
<dbReference type="ChiTaRS" id="Comt">
    <property type="organism name" value="mouse"/>
</dbReference>
<dbReference type="EvolutionaryTrace" id="O88587"/>
<dbReference type="PRO" id="PR:O88587"/>
<dbReference type="Proteomes" id="UP000000589">
    <property type="component" value="Chromosome 16"/>
</dbReference>
<dbReference type="RNAct" id="O88587">
    <property type="molecule type" value="protein"/>
</dbReference>
<dbReference type="Bgee" id="ENSMUSG00000000326">
    <property type="expression patterns" value="Expressed in white adipose tissue and 115 other cell types or tissues"/>
</dbReference>
<dbReference type="ExpressionAtlas" id="O88587">
    <property type="expression patterns" value="baseline and differential"/>
</dbReference>
<dbReference type="GO" id="GO:0005829">
    <property type="term" value="C:cytosol"/>
    <property type="evidence" value="ECO:0000314"/>
    <property type="project" value="MGI"/>
</dbReference>
<dbReference type="GO" id="GO:0005739">
    <property type="term" value="C:mitochondrion"/>
    <property type="evidence" value="ECO:0007005"/>
    <property type="project" value="MGI"/>
</dbReference>
<dbReference type="GO" id="GO:0005886">
    <property type="term" value="C:plasma membrane"/>
    <property type="evidence" value="ECO:0007669"/>
    <property type="project" value="UniProtKB-SubCell"/>
</dbReference>
<dbReference type="GO" id="GO:0045202">
    <property type="term" value="C:synapse"/>
    <property type="evidence" value="ECO:0007669"/>
    <property type="project" value="GOC"/>
</dbReference>
<dbReference type="GO" id="GO:0031982">
    <property type="term" value="C:vesicle"/>
    <property type="evidence" value="ECO:0000314"/>
    <property type="project" value="MGI"/>
</dbReference>
<dbReference type="GO" id="GO:0016206">
    <property type="term" value="F:catechol O-methyltransferase activity"/>
    <property type="evidence" value="ECO:0000314"/>
    <property type="project" value="MGI"/>
</dbReference>
<dbReference type="GO" id="GO:0000287">
    <property type="term" value="F:magnesium ion binding"/>
    <property type="evidence" value="ECO:0007669"/>
    <property type="project" value="InterPro"/>
</dbReference>
<dbReference type="GO" id="GO:0060840">
    <property type="term" value="P:artery development"/>
    <property type="evidence" value="ECO:0000315"/>
    <property type="project" value="MGI"/>
</dbReference>
<dbReference type="GO" id="GO:0001662">
    <property type="term" value="P:behavioral fear response"/>
    <property type="evidence" value="ECO:0000315"/>
    <property type="project" value="MGI"/>
</dbReference>
<dbReference type="GO" id="GO:0009712">
    <property type="term" value="P:catechol-containing compound metabolic process"/>
    <property type="evidence" value="ECO:0000315"/>
    <property type="project" value="MGI"/>
</dbReference>
<dbReference type="GO" id="GO:0006584">
    <property type="term" value="P:catecholamine metabolic process"/>
    <property type="evidence" value="ECO:0000315"/>
    <property type="project" value="MGI"/>
</dbReference>
<dbReference type="GO" id="GO:0071314">
    <property type="term" value="P:cellular response to cocaine"/>
    <property type="evidence" value="ECO:0000315"/>
    <property type="project" value="MGI"/>
</dbReference>
<dbReference type="GO" id="GO:0016036">
    <property type="term" value="P:cellular response to phosphate starvation"/>
    <property type="evidence" value="ECO:0000314"/>
    <property type="project" value="MGI"/>
</dbReference>
<dbReference type="GO" id="GO:0021696">
    <property type="term" value="P:cerebellar cortex morphogenesis"/>
    <property type="evidence" value="ECO:0000315"/>
    <property type="project" value="MGI"/>
</dbReference>
<dbReference type="GO" id="GO:0033344">
    <property type="term" value="P:cholesterol efflux"/>
    <property type="evidence" value="ECO:0000315"/>
    <property type="project" value="MGI"/>
</dbReference>
<dbReference type="GO" id="GO:0050890">
    <property type="term" value="P:cognition"/>
    <property type="evidence" value="ECO:0000314"/>
    <property type="project" value="MGI"/>
</dbReference>
<dbReference type="GO" id="GO:0050965">
    <property type="term" value="P:detection of temperature stimulus involved in sensory perception of pain"/>
    <property type="evidence" value="ECO:0000315"/>
    <property type="project" value="MGI"/>
</dbReference>
<dbReference type="GO" id="GO:0042420">
    <property type="term" value="P:dopamine catabolic process"/>
    <property type="evidence" value="ECO:0000314"/>
    <property type="project" value="MGI"/>
</dbReference>
<dbReference type="GO" id="GO:0042417">
    <property type="term" value="P:dopamine metabolic process"/>
    <property type="evidence" value="ECO:0000314"/>
    <property type="project" value="MGI"/>
</dbReference>
<dbReference type="GO" id="GO:0014046">
    <property type="term" value="P:dopamine secretion"/>
    <property type="evidence" value="ECO:0000314"/>
    <property type="project" value="MGI"/>
</dbReference>
<dbReference type="GO" id="GO:0035640">
    <property type="term" value="P:exploration behavior"/>
    <property type="evidence" value="ECO:0000315"/>
    <property type="project" value="MGI"/>
</dbReference>
<dbReference type="GO" id="GO:0042596">
    <property type="term" value="P:fear response"/>
    <property type="evidence" value="ECO:0000315"/>
    <property type="project" value="MGI"/>
</dbReference>
<dbReference type="GO" id="GO:0010467">
    <property type="term" value="P:gene expression"/>
    <property type="evidence" value="ECO:0000315"/>
    <property type="project" value="MGI"/>
</dbReference>
<dbReference type="GO" id="GO:0032835">
    <property type="term" value="P:glomerulus development"/>
    <property type="evidence" value="ECO:0000315"/>
    <property type="project" value="MGI"/>
</dbReference>
<dbReference type="GO" id="GO:0005977">
    <property type="term" value="P:glycogen metabolic process"/>
    <property type="evidence" value="ECO:0000316"/>
    <property type="project" value="MGI"/>
</dbReference>
<dbReference type="GO" id="GO:0046959">
    <property type="term" value="P:habituation"/>
    <property type="evidence" value="ECO:0000315"/>
    <property type="project" value="MGI"/>
</dbReference>
<dbReference type="GO" id="GO:0001822">
    <property type="term" value="P:kidney development"/>
    <property type="evidence" value="ECO:0000315"/>
    <property type="project" value="MGI"/>
</dbReference>
<dbReference type="GO" id="GO:0007612">
    <property type="term" value="P:learning"/>
    <property type="evidence" value="ECO:0000315"/>
    <property type="project" value="MGI"/>
</dbReference>
<dbReference type="GO" id="GO:0007611">
    <property type="term" value="P:learning or memory"/>
    <property type="evidence" value="ECO:0000314"/>
    <property type="project" value="MGI"/>
</dbReference>
<dbReference type="GO" id="GO:0071626">
    <property type="term" value="P:mastication"/>
    <property type="evidence" value="ECO:0000315"/>
    <property type="project" value="MGI"/>
</dbReference>
<dbReference type="GO" id="GO:0007613">
    <property type="term" value="P:memory"/>
    <property type="evidence" value="ECO:0000315"/>
    <property type="project" value="MGI"/>
</dbReference>
<dbReference type="GO" id="GO:0032259">
    <property type="term" value="P:methylation"/>
    <property type="evidence" value="ECO:0000250"/>
    <property type="project" value="UniProtKB"/>
</dbReference>
<dbReference type="GO" id="GO:0035264">
    <property type="term" value="P:multicellular organism growth"/>
    <property type="evidence" value="ECO:0000315"/>
    <property type="project" value="MGI"/>
</dbReference>
<dbReference type="GO" id="GO:0033555">
    <property type="term" value="P:multicellular organismal response to stress"/>
    <property type="evidence" value="ECO:0000315"/>
    <property type="project" value="MGI"/>
</dbReference>
<dbReference type="GO" id="GO:0042415">
    <property type="term" value="P:norepinephrine metabolic process"/>
    <property type="evidence" value="ECO:0000315"/>
    <property type="project" value="MGI"/>
</dbReference>
<dbReference type="GO" id="GO:0048243">
    <property type="term" value="P:norepinephrine secretion"/>
    <property type="evidence" value="ECO:0000315"/>
    <property type="project" value="MGI"/>
</dbReference>
<dbReference type="GO" id="GO:0006693">
    <property type="term" value="P:prostaglandin metabolic process"/>
    <property type="evidence" value="ECO:0000315"/>
    <property type="project" value="MGI"/>
</dbReference>
<dbReference type="GO" id="GO:0008217">
    <property type="term" value="P:regulation of blood pressure"/>
    <property type="evidence" value="ECO:0000315"/>
    <property type="project" value="MGI"/>
</dbReference>
<dbReference type="GO" id="GO:0097018">
    <property type="term" value="P:renal albumin absorption"/>
    <property type="evidence" value="ECO:0000315"/>
    <property type="project" value="MGI"/>
</dbReference>
<dbReference type="GO" id="GO:0097205">
    <property type="term" value="P:renal filtration"/>
    <property type="evidence" value="ECO:0000315"/>
    <property type="project" value="MGI"/>
</dbReference>
<dbReference type="GO" id="GO:0035812">
    <property type="term" value="P:renal sodium excretion"/>
    <property type="evidence" value="ECO:0000315"/>
    <property type="project" value="MGI"/>
</dbReference>
<dbReference type="GO" id="GO:0002001">
    <property type="term" value="P:renin secretion into blood stream"/>
    <property type="evidence" value="ECO:0000315"/>
    <property type="project" value="MGI"/>
</dbReference>
<dbReference type="GO" id="GO:0001975">
    <property type="term" value="P:response to amphetamine"/>
    <property type="evidence" value="ECO:0000315"/>
    <property type="project" value="MGI"/>
</dbReference>
<dbReference type="GO" id="GO:1990776">
    <property type="term" value="P:response to angiotensin"/>
    <property type="evidence" value="ECO:0000315"/>
    <property type="project" value="MGI"/>
</dbReference>
<dbReference type="GO" id="GO:0051412">
    <property type="term" value="P:response to corticosterone"/>
    <property type="evidence" value="ECO:0000315"/>
    <property type="project" value="MGI"/>
</dbReference>
<dbReference type="GO" id="GO:0034097">
    <property type="term" value="P:response to cytokine"/>
    <property type="evidence" value="ECO:0000315"/>
    <property type="project" value="MGI"/>
</dbReference>
<dbReference type="GO" id="GO:1903350">
    <property type="term" value="P:response to dopamine"/>
    <property type="evidence" value="ECO:0000315"/>
    <property type="project" value="MGI"/>
</dbReference>
<dbReference type="GO" id="GO:0032094">
    <property type="term" value="P:response to food"/>
    <property type="evidence" value="ECO:0000315"/>
    <property type="project" value="MGI"/>
</dbReference>
<dbReference type="GO" id="GO:0001666">
    <property type="term" value="P:response to hypoxia"/>
    <property type="evidence" value="ECO:0000315"/>
    <property type="project" value="MGI"/>
</dbReference>
<dbReference type="GO" id="GO:0006979">
    <property type="term" value="P:response to oxidative stress"/>
    <property type="evidence" value="ECO:0000315"/>
    <property type="project" value="MGI"/>
</dbReference>
<dbReference type="GO" id="GO:1902074">
    <property type="term" value="P:response to salt"/>
    <property type="evidence" value="ECO:0000315"/>
    <property type="project" value="MGI"/>
</dbReference>
<dbReference type="GO" id="GO:0006950">
    <property type="term" value="P:response to stress"/>
    <property type="evidence" value="ECO:0000315"/>
    <property type="project" value="MGI"/>
</dbReference>
<dbReference type="GO" id="GO:0009266">
    <property type="term" value="P:response to temperature stimulus"/>
    <property type="evidence" value="ECO:0000315"/>
    <property type="project" value="MGI"/>
</dbReference>
<dbReference type="GO" id="GO:0009636">
    <property type="term" value="P:response to toxic substance"/>
    <property type="evidence" value="ECO:0000315"/>
    <property type="project" value="MGI"/>
</dbReference>
<dbReference type="GO" id="GO:0009611">
    <property type="term" value="P:response to wounding"/>
    <property type="evidence" value="ECO:0000315"/>
    <property type="project" value="MGI"/>
</dbReference>
<dbReference type="GO" id="GO:0009410">
    <property type="term" value="P:response to xenobiotic stimulus"/>
    <property type="evidence" value="ECO:0000315"/>
    <property type="project" value="MGI"/>
</dbReference>
<dbReference type="GO" id="GO:0001964">
    <property type="term" value="P:startle response"/>
    <property type="evidence" value="ECO:0000315"/>
    <property type="project" value="MGI"/>
</dbReference>
<dbReference type="GO" id="GO:0001963">
    <property type="term" value="P:synaptic transmission, dopaminergic"/>
    <property type="evidence" value="ECO:0000315"/>
    <property type="project" value="MGI"/>
</dbReference>
<dbReference type="GO" id="GO:0008542">
    <property type="term" value="P:visual learning"/>
    <property type="evidence" value="ECO:0000315"/>
    <property type="project" value="MGI"/>
</dbReference>
<dbReference type="CDD" id="cd02440">
    <property type="entry name" value="AdoMet_MTases"/>
    <property type="match status" value="1"/>
</dbReference>
<dbReference type="FunFam" id="3.40.50.150:FF:000054">
    <property type="entry name" value="Catechol O-methyltransferase"/>
    <property type="match status" value="1"/>
</dbReference>
<dbReference type="Gene3D" id="3.40.50.150">
    <property type="entry name" value="Vaccinia Virus protein VP39"/>
    <property type="match status" value="1"/>
</dbReference>
<dbReference type="InterPro" id="IPR017128">
    <property type="entry name" value="Catechol_O-MeTrfase_euk"/>
</dbReference>
<dbReference type="InterPro" id="IPR029063">
    <property type="entry name" value="SAM-dependent_MTases_sf"/>
</dbReference>
<dbReference type="InterPro" id="IPR002935">
    <property type="entry name" value="SAM_O-MeTrfase"/>
</dbReference>
<dbReference type="PANTHER" id="PTHR43836:SF3">
    <property type="entry name" value="CATECHOL O-METHYLTRANSFERASE"/>
    <property type="match status" value="1"/>
</dbReference>
<dbReference type="PANTHER" id="PTHR43836">
    <property type="entry name" value="CATECHOL O-METHYLTRANSFERASE 1-RELATED"/>
    <property type="match status" value="1"/>
</dbReference>
<dbReference type="Pfam" id="PF01596">
    <property type="entry name" value="Methyltransf_3"/>
    <property type="match status" value="1"/>
</dbReference>
<dbReference type="PIRSF" id="PIRSF037177">
    <property type="entry name" value="Catechol_O-mtfrase_euk"/>
    <property type="match status" value="1"/>
</dbReference>
<dbReference type="SUPFAM" id="SSF53335">
    <property type="entry name" value="S-adenosyl-L-methionine-dependent methyltransferases"/>
    <property type="match status" value="1"/>
</dbReference>
<dbReference type="PROSITE" id="PS51682">
    <property type="entry name" value="SAM_OMT_I"/>
    <property type="match status" value="1"/>
</dbReference>
<accession>O88587</accession>
<accession>Q91XH4</accession>
<feature type="chain" id="PRO_0000020973" description="Catechol O-methyltransferase">
    <location>
        <begin position="1"/>
        <end position="265"/>
    </location>
</feature>
<feature type="topological domain" description="Cytoplasmic" evidence="4">
    <location>
        <begin position="1"/>
        <end position="2"/>
    </location>
</feature>
<feature type="transmembrane region" description="Helical; Signal-anchor for type II membrane protein" evidence="4">
    <location>
        <begin position="3"/>
        <end position="19"/>
    </location>
</feature>
<feature type="topological domain" description="Extracellular" evidence="4">
    <location>
        <begin position="20"/>
        <end position="265"/>
    </location>
</feature>
<feature type="binding site" evidence="5">
    <location>
        <position position="85"/>
    </location>
    <ligand>
        <name>S-adenosyl-L-methionine</name>
        <dbReference type="ChEBI" id="CHEBI:59789"/>
    </ligand>
</feature>
<feature type="binding site" evidence="5">
    <location>
        <position position="107"/>
    </location>
    <ligand>
        <name>S-adenosyl-L-methionine</name>
        <dbReference type="ChEBI" id="CHEBI:59789"/>
    </ligand>
</feature>
<feature type="binding site" evidence="5">
    <location>
        <position position="115"/>
    </location>
    <ligand>
        <name>S-adenosyl-L-methionine</name>
        <dbReference type="ChEBI" id="CHEBI:59789"/>
    </ligand>
</feature>
<feature type="binding site" evidence="5">
    <location>
        <position position="133"/>
    </location>
    <ligand>
        <name>S-adenosyl-L-methionine</name>
        <dbReference type="ChEBI" id="CHEBI:59789"/>
    </ligand>
</feature>
<feature type="binding site" evidence="5">
    <location>
        <position position="134"/>
    </location>
    <ligand>
        <name>S-adenosyl-L-methionine</name>
        <dbReference type="ChEBI" id="CHEBI:59789"/>
    </ligand>
</feature>
<feature type="binding site" evidence="5">
    <location>
        <begin position="160"/>
        <end position="163"/>
    </location>
    <ligand>
        <name>S-adenosyl-L-methionine</name>
        <dbReference type="ChEBI" id="CHEBI:59789"/>
    </ligand>
</feature>
<feature type="binding site" evidence="5">
    <location>
        <position position="162"/>
    </location>
    <ligand>
        <name>S-adenosyl-L-methionine</name>
        <dbReference type="ChEBI" id="CHEBI:59789"/>
    </ligand>
</feature>
<feature type="binding site" evidence="1">
    <location>
        <position position="184"/>
    </location>
    <ligand>
        <name>Mg(2+)</name>
        <dbReference type="ChEBI" id="CHEBI:18420"/>
    </ligand>
</feature>
<feature type="binding site" evidence="5">
    <location>
        <position position="184"/>
    </location>
    <ligand>
        <name>S-adenosyl-L-methionine</name>
        <dbReference type="ChEBI" id="CHEBI:59789"/>
    </ligand>
</feature>
<feature type="binding site" evidence="1">
    <location>
        <position position="187"/>
    </location>
    <ligand>
        <name>substrate</name>
    </ligand>
</feature>
<feature type="binding site" evidence="1">
    <location>
        <position position="212"/>
    </location>
    <ligand>
        <name>Mg(2+)</name>
        <dbReference type="ChEBI" id="CHEBI:18420"/>
    </ligand>
</feature>
<feature type="binding site" evidence="1">
    <location>
        <position position="213"/>
    </location>
    <ligand>
        <name>Mg(2+)</name>
        <dbReference type="ChEBI" id="CHEBI:18420"/>
    </ligand>
</feature>
<feature type="binding site" evidence="1">
    <location>
        <position position="213"/>
    </location>
    <ligand>
        <name>substrate</name>
    </ligand>
</feature>
<feature type="binding site" evidence="1">
    <location>
        <position position="242"/>
    </location>
    <ligand>
        <name>substrate</name>
    </ligand>
</feature>
<feature type="modified residue" description="Phosphoserine" evidence="3">
    <location>
        <position position="260"/>
    </location>
</feature>
<feature type="modified residue" description="Phosphoserine" evidence="9 10 11">
    <location>
        <position position="261"/>
    </location>
</feature>
<feature type="modified residue" description="Phosphoserine" evidence="3">
    <location>
        <position position="265"/>
    </location>
</feature>
<feature type="splice variant" id="VSP_018779" description="In isoform Soluble." evidence="7">
    <location>
        <begin position="1"/>
        <end position="43"/>
    </location>
</feature>
<feature type="mutagenesis site" description="Reduces methyltransferase activity against norepinephrine." evidence="6">
    <original>R</original>
    <variation>L</variation>
    <location>
        <position position="51"/>
    </location>
</feature>
<feature type="sequence conflict" description="In Ref. 1; AAC33334." evidence="7" ref="1">
    <original>S</original>
    <variation>P</variation>
    <location>
        <position position="162"/>
    </location>
</feature>
<feature type="helix" evidence="12">
    <location>
        <begin position="48"/>
        <end position="59"/>
    </location>
</feature>
<feature type="helix" evidence="12">
    <location>
        <begin position="65"/>
        <end position="78"/>
    </location>
</feature>
<feature type="strand" evidence="12">
    <location>
        <begin position="81"/>
        <end position="83"/>
    </location>
</feature>
<feature type="helix" evidence="12">
    <location>
        <begin position="85"/>
        <end position="88"/>
    </location>
</feature>
<feature type="helix" evidence="12">
    <location>
        <begin position="90"/>
        <end position="100"/>
    </location>
</feature>
<feature type="strand" evidence="12">
    <location>
        <begin position="103"/>
        <end position="108"/>
    </location>
</feature>
<feature type="strand" evidence="12">
    <location>
        <begin position="111"/>
        <end position="113"/>
    </location>
</feature>
<feature type="helix" evidence="12">
    <location>
        <begin position="114"/>
        <end position="120"/>
    </location>
</feature>
<feature type="strand" evidence="12">
    <location>
        <begin position="128"/>
        <end position="134"/>
    </location>
</feature>
<feature type="helix" evidence="12">
    <location>
        <begin position="136"/>
        <end position="149"/>
    </location>
</feature>
<feature type="helix" evidence="12">
    <location>
        <begin position="152"/>
        <end position="154"/>
    </location>
</feature>
<feature type="strand" evidence="12">
    <location>
        <begin position="155"/>
        <end position="160"/>
    </location>
</feature>
<feature type="helix" evidence="12">
    <location>
        <begin position="162"/>
        <end position="165"/>
    </location>
</feature>
<feature type="helix" evidence="12">
    <location>
        <begin position="166"/>
        <end position="168"/>
    </location>
</feature>
<feature type="helix" evidence="12">
    <location>
        <begin position="169"/>
        <end position="173"/>
    </location>
</feature>
<feature type="strand" evidence="12">
    <location>
        <begin position="178"/>
        <end position="183"/>
    </location>
</feature>
<feature type="helix" evidence="12">
    <location>
        <begin position="187"/>
        <end position="189"/>
    </location>
</feature>
<feature type="helix" evidence="12">
    <location>
        <begin position="190"/>
        <end position="199"/>
    </location>
</feature>
<feature type="strand" evidence="12">
    <location>
        <begin position="203"/>
        <end position="212"/>
    </location>
</feature>
<feature type="helix" evidence="12">
    <location>
        <begin position="220"/>
        <end position="228"/>
    </location>
</feature>
<feature type="strand" evidence="12">
    <location>
        <begin position="232"/>
        <end position="239"/>
    </location>
</feature>
<feature type="strand" evidence="12">
    <location>
        <begin position="243"/>
        <end position="245"/>
    </location>
</feature>
<feature type="strand" evidence="12">
    <location>
        <begin position="247"/>
        <end position="255"/>
    </location>
</feature>
<comment type="function">
    <text evidence="6">Catalyzes the O-methylation, and thereby the inactivation, of catecholamine neurotransmitters and catechol hormones. Also shortens the biological half-lives of certain neuroactive drugs, like L-DOPA, alpha-methyl DOPA and isoproterenol.</text>
</comment>
<comment type="catalytic activity">
    <reaction evidence="2">
        <text>a catechol + S-adenosyl-L-methionine = a guaiacol + S-adenosyl-L-homocysteine + H(+)</text>
        <dbReference type="Rhea" id="RHEA:17877"/>
        <dbReference type="ChEBI" id="CHEBI:15378"/>
        <dbReference type="ChEBI" id="CHEBI:33566"/>
        <dbReference type="ChEBI" id="CHEBI:57856"/>
        <dbReference type="ChEBI" id="CHEBI:59789"/>
        <dbReference type="ChEBI" id="CHEBI:134251"/>
        <dbReference type="EC" id="2.1.1.6"/>
    </reaction>
    <physiologicalReaction direction="left-to-right" evidence="2">
        <dbReference type="Rhea" id="RHEA:17878"/>
    </physiologicalReaction>
</comment>
<comment type="catalytic activity">
    <reaction evidence="2">
        <text>2-hydroxyestrone + S-adenosyl-L-methionine = 2-hydroxy-3-methoxy-estrone + S-adenosyl-L-homocysteine + H(+)</text>
        <dbReference type="Rhea" id="RHEA:53108"/>
        <dbReference type="ChEBI" id="CHEBI:1156"/>
        <dbReference type="ChEBI" id="CHEBI:15378"/>
        <dbReference type="ChEBI" id="CHEBI:57856"/>
        <dbReference type="ChEBI" id="CHEBI:59789"/>
        <dbReference type="ChEBI" id="CHEBI:136980"/>
    </reaction>
    <physiologicalReaction direction="left-to-right" evidence="2">
        <dbReference type="Rhea" id="RHEA:53109"/>
    </physiologicalReaction>
</comment>
<comment type="catalytic activity">
    <reaction evidence="2">
        <text>4-hydroxyestrone + S-adenosyl-L-methionine = 4-methoxyestrone + S-adenosyl-L-homocysteine + H(+)</text>
        <dbReference type="Rhea" id="RHEA:53104"/>
        <dbReference type="ChEBI" id="CHEBI:15378"/>
        <dbReference type="ChEBI" id="CHEBI:57856"/>
        <dbReference type="ChEBI" id="CHEBI:59789"/>
        <dbReference type="ChEBI" id="CHEBI:87602"/>
        <dbReference type="ChEBI" id="CHEBI:136972"/>
    </reaction>
    <physiologicalReaction direction="left-to-right" evidence="2">
        <dbReference type="Rhea" id="RHEA:53105"/>
    </physiologicalReaction>
</comment>
<comment type="catalytic activity">
    <reaction evidence="2">
        <text>2-hydroxyestrone + S-adenosyl-L-methionine = 2-methoxyestrone + S-adenosyl-L-homocysteine + H(+)</text>
        <dbReference type="Rhea" id="RHEA:53100"/>
        <dbReference type="ChEBI" id="CHEBI:1156"/>
        <dbReference type="ChEBI" id="CHEBI:1189"/>
        <dbReference type="ChEBI" id="CHEBI:15378"/>
        <dbReference type="ChEBI" id="CHEBI:57856"/>
        <dbReference type="ChEBI" id="CHEBI:59789"/>
    </reaction>
    <physiologicalReaction direction="left-to-right" evidence="2">
        <dbReference type="Rhea" id="RHEA:53101"/>
    </physiologicalReaction>
</comment>
<comment type="catalytic activity">
    <reaction evidence="2">
        <text>4-hydroxy-17beta-estradiol + S-adenosyl-L-methionine = 4-methoxy-17beta-estradiol + S-adenosyl-L-homocysteine + H(+)</text>
        <dbReference type="Rhea" id="RHEA:53096"/>
        <dbReference type="ChEBI" id="CHEBI:15378"/>
        <dbReference type="ChEBI" id="CHEBI:57856"/>
        <dbReference type="ChEBI" id="CHEBI:59789"/>
        <dbReference type="ChEBI" id="CHEBI:62845"/>
        <dbReference type="ChEBI" id="CHEBI:136975"/>
    </reaction>
    <physiologicalReaction direction="left-to-right" evidence="2">
        <dbReference type="Rhea" id="RHEA:53097"/>
    </physiologicalReaction>
</comment>
<comment type="catalytic activity">
    <reaction evidence="2">
        <text>2-hydroxy-17beta-estradiol + S-adenosyl-L-methionine = 2-hydroxy-3-methoxy-17beta-estradiol + S-adenosyl-L-homocysteine + H(+)</text>
        <dbReference type="Rhea" id="RHEA:53092"/>
        <dbReference type="ChEBI" id="CHEBI:15378"/>
        <dbReference type="ChEBI" id="CHEBI:28744"/>
        <dbReference type="ChEBI" id="CHEBI:57856"/>
        <dbReference type="ChEBI" id="CHEBI:59789"/>
        <dbReference type="ChEBI" id="CHEBI:89268"/>
    </reaction>
    <physiologicalReaction direction="left-to-right" evidence="2">
        <dbReference type="Rhea" id="RHEA:53093"/>
    </physiologicalReaction>
</comment>
<comment type="catalytic activity">
    <reaction evidence="2">
        <text>2-hydroxy-17beta-estradiol + S-adenosyl-L-methionine = 2-methoxy-17beta-estradiol + S-adenosyl-L-homocysteine + H(+)</text>
        <dbReference type="Rhea" id="RHEA:53088"/>
        <dbReference type="ChEBI" id="CHEBI:15378"/>
        <dbReference type="ChEBI" id="CHEBI:28744"/>
        <dbReference type="ChEBI" id="CHEBI:28955"/>
        <dbReference type="ChEBI" id="CHEBI:57856"/>
        <dbReference type="ChEBI" id="CHEBI:59789"/>
    </reaction>
    <physiologicalReaction direction="left-to-right" evidence="2">
        <dbReference type="Rhea" id="RHEA:53089"/>
    </physiologicalReaction>
</comment>
<comment type="cofactor">
    <cofactor evidence="3">
        <name>Mg(2+)</name>
        <dbReference type="ChEBI" id="CHEBI:18420"/>
    </cofactor>
    <text evidence="3">Binds 1 Mg(2+) ion per subunit.</text>
</comment>
<comment type="subcellular location">
    <molecule>Isoform Soluble</molecule>
    <subcellularLocation>
        <location evidence="3">Cytoplasm</location>
    </subcellularLocation>
</comment>
<comment type="subcellular location">
    <molecule>Isoform Membrane-bound</molecule>
    <subcellularLocation>
        <location evidence="3">Cell membrane</location>
        <topology evidence="4">Single-pass type II membrane protein</topology>
        <orientation evidence="3">Extracellular side</orientation>
    </subcellularLocation>
</comment>
<comment type="alternative products">
    <event type="alternative initiation"/>
    <isoform>
        <id>O88587-1</id>
        <name>Membrane-bound</name>
        <name>MB-COMT</name>
        <sequence type="displayed"/>
    </isoform>
    <isoform>
        <id>O88587-2</id>
        <name>Soluble</name>
        <name>S-COMT</name>
        <sequence type="described" ref="VSP_018779"/>
    </isoform>
</comment>
<comment type="similarity">
    <text evidence="5">Belongs to the class I-like SAM-binding methyltransferase superfamily. Cation-dependent O-methyltransferase family.</text>
</comment>
<reference key="1">
    <citation type="journal article" date="1998" name="Proc. Natl. Acad. Sci. U.S.A.">
        <title>Catechol-O-methyltransferase-deficient mice exhibit sexually dimorphic changes in catecholamine levels and behavior.</title>
        <authorList>
            <person name="Gogos J.A."/>
            <person name="Morgan M."/>
            <person name="Luine V."/>
            <person name="Santha M."/>
            <person name="Ogawa S."/>
            <person name="Pfaff D."/>
            <person name="Karayiorgou M."/>
        </authorList>
    </citation>
    <scope>NUCLEOTIDE SEQUENCE [MRNA]</scope>
</reference>
<reference key="2">
    <citation type="journal article" date="2005" name="Science">
        <title>The transcriptional landscape of the mammalian genome.</title>
        <authorList>
            <person name="Carninci P."/>
            <person name="Kasukawa T."/>
            <person name="Katayama S."/>
            <person name="Gough J."/>
            <person name="Frith M.C."/>
            <person name="Maeda N."/>
            <person name="Oyama R."/>
            <person name="Ravasi T."/>
            <person name="Lenhard B."/>
            <person name="Wells C."/>
            <person name="Kodzius R."/>
            <person name="Shimokawa K."/>
            <person name="Bajic V.B."/>
            <person name="Brenner S.E."/>
            <person name="Batalov S."/>
            <person name="Forrest A.R."/>
            <person name="Zavolan M."/>
            <person name="Davis M.J."/>
            <person name="Wilming L.G."/>
            <person name="Aidinis V."/>
            <person name="Allen J.E."/>
            <person name="Ambesi-Impiombato A."/>
            <person name="Apweiler R."/>
            <person name="Aturaliya R.N."/>
            <person name="Bailey T.L."/>
            <person name="Bansal M."/>
            <person name="Baxter L."/>
            <person name="Beisel K.W."/>
            <person name="Bersano T."/>
            <person name="Bono H."/>
            <person name="Chalk A.M."/>
            <person name="Chiu K.P."/>
            <person name="Choudhary V."/>
            <person name="Christoffels A."/>
            <person name="Clutterbuck D.R."/>
            <person name="Crowe M.L."/>
            <person name="Dalla E."/>
            <person name="Dalrymple B.P."/>
            <person name="de Bono B."/>
            <person name="Della Gatta G."/>
            <person name="di Bernardo D."/>
            <person name="Down T."/>
            <person name="Engstrom P."/>
            <person name="Fagiolini M."/>
            <person name="Faulkner G."/>
            <person name="Fletcher C.F."/>
            <person name="Fukushima T."/>
            <person name="Furuno M."/>
            <person name="Futaki S."/>
            <person name="Gariboldi M."/>
            <person name="Georgii-Hemming P."/>
            <person name="Gingeras T.R."/>
            <person name="Gojobori T."/>
            <person name="Green R.E."/>
            <person name="Gustincich S."/>
            <person name="Harbers M."/>
            <person name="Hayashi Y."/>
            <person name="Hensch T.K."/>
            <person name="Hirokawa N."/>
            <person name="Hill D."/>
            <person name="Huminiecki L."/>
            <person name="Iacono M."/>
            <person name="Ikeo K."/>
            <person name="Iwama A."/>
            <person name="Ishikawa T."/>
            <person name="Jakt M."/>
            <person name="Kanapin A."/>
            <person name="Katoh M."/>
            <person name="Kawasawa Y."/>
            <person name="Kelso J."/>
            <person name="Kitamura H."/>
            <person name="Kitano H."/>
            <person name="Kollias G."/>
            <person name="Krishnan S.P."/>
            <person name="Kruger A."/>
            <person name="Kummerfeld S.K."/>
            <person name="Kurochkin I.V."/>
            <person name="Lareau L.F."/>
            <person name="Lazarevic D."/>
            <person name="Lipovich L."/>
            <person name="Liu J."/>
            <person name="Liuni S."/>
            <person name="McWilliam S."/>
            <person name="Madan Babu M."/>
            <person name="Madera M."/>
            <person name="Marchionni L."/>
            <person name="Matsuda H."/>
            <person name="Matsuzawa S."/>
            <person name="Miki H."/>
            <person name="Mignone F."/>
            <person name="Miyake S."/>
            <person name="Morris K."/>
            <person name="Mottagui-Tabar S."/>
            <person name="Mulder N."/>
            <person name="Nakano N."/>
            <person name="Nakauchi H."/>
            <person name="Ng P."/>
            <person name="Nilsson R."/>
            <person name="Nishiguchi S."/>
            <person name="Nishikawa S."/>
            <person name="Nori F."/>
            <person name="Ohara O."/>
            <person name="Okazaki Y."/>
            <person name="Orlando V."/>
            <person name="Pang K.C."/>
            <person name="Pavan W.J."/>
            <person name="Pavesi G."/>
            <person name="Pesole G."/>
            <person name="Petrovsky N."/>
            <person name="Piazza S."/>
            <person name="Reed J."/>
            <person name="Reid J.F."/>
            <person name="Ring B.Z."/>
            <person name="Ringwald M."/>
            <person name="Rost B."/>
            <person name="Ruan Y."/>
            <person name="Salzberg S.L."/>
            <person name="Sandelin A."/>
            <person name="Schneider C."/>
            <person name="Schoenbach C."/>
            <person name="Sekiguchi K."/>
            <person name="Semple C.A."/>
            <person name="Seno S."/>
            <person name="Sessa L."/>
            <person name="Sheng Y."/>
            <person name="Shibata Y."/>
            <person name="Shimada H."/>
            <person name="Shimada K."/>
            <person name="Silva D."/>
            <person name="Sinclair B."/>
            <person name="Sperling S."/>
            <person name="Stupka E."/>
            <person name="Sugiura K."/>
            <person name="Sultana R."/>
            <person name="Takenaka Y."/>
            <person name="Taki K."/>
            <person name="Tammoja K."/>
            <person name="Tan S.L."/>
            <person name="Tang S."/>
            <person name="Taylor M.S."/>
            <person name="Tegner J."/>
            <person name="Teichmann S.A."/>
            <person name="Ueda H.R."/>
            <person name="van Nimwegen E."/>
            <person name="Verardo R."/>
            <person name="Wei C.L."/>
            <person name="Yagi K."/>
            <person name="Yamanishi H."/>
            <person name="Zabarovsky E."/>
            <person name="Zhu S."/>
            <person name="Zimmer A."/>
            <person name="Hide W."/>
            <person name="Bult C."/>
            <person name="Grimmond S.M."/>
            <person name="Teasdale R.D."/>
            <person name="Liu E.T."/>
            <person name="Brusic V."/>
            <person name="Quackenbush J."/>
            <person name="Wahlestedt C."/>
            <person name="Mattick J.S."/>
            <person name="Hume D.A."/>
            <person name="Kai C."/>
            <person name="Sasaki D."/>
            <person name="Tomaru Y."/>
            <person name="Fukuda S."/>
            <person name="Kanamori-Katayama M."/>
            <person name="Suzuki M."/>
            <person name="Aoki J."/>
            <person name="Arakawa T."/>
            <person name="Iida J."/>
            <person name="Imamura K."/>
            <person name="Itoh M."/>
            <person name="Kato T."/>
            <person name="Kawaji H."/>
            <person name="Kawagashira N."/>
            <person name="Kawashima T."/>
            <person name="Kojima M."/>
            <person name="Kondo S."/>
            <person name="Konno H."/>
            <person name="Nakano K."/>
            <person name="Ninomiya N."/>
            <person name="Nishio T."/>
            <person name="Okada M."/>
            <person name="Plessy C."/>
            <person name="Shibata K."/>
            <person name="Shiraki T."/>
            <person name="Suzuki S."/>
            <person name="Tagami M."/>
            <person name="Waki K."/>
            <person name="Watahiki A."/>
            <person name="Okamura-Oho Y."/>
            <person name="Suzuki H."/>
            <person name="Kawai J."/>
            <person name="Hayashizaki Y."/>
        </authorList>
    </citation>
    <scope>NUCLEOTIDE SEQUENCE [LARGE SCALE MRNA]</scope>
    <source>
        <strain>C57BL/6J</strain>
    </source>
</reference>
<reference key="3">
    <citation type="journal article" date="2009" name="PLoS Biol.">
        <title>Lineage-specific biology revealed by a finished genome assembly of the mouse.</title>
        <authorList>
            <person name="Church D.M."/>
            <person name="Goodstadt L."/>
            <person name="Hillier L.W."/>
            <person name="Zody M.C."/>
            <person name="Goldstein S."/>
            <person name="She X."/>
            <person name="Bult C.J."/>
            <person name="Agarwala R."/>
            <person name="Cherry J.L."/>
            <person name="DiCuccio M."/>
            <person name="Hlavina W."/>
            <person name="Kapustin Y."/>
            <person name="Meric P."/>
            <person name="Maglott D."/>
            <person name="Birtle Z."/>
            <person name="Marques A.C."/>
            <person name="Graves T."/>
            <person name="Zhou S."/>
            <person name="Teague B."/>
            <person name="Potamousis K."/>
            <person name="Churas C."/>
            <person name="Place M."/>
            <person name="Herschleb J."/>
            <person name="Runnheim R."/>
            <person name="Forrest D."/>
            <person name="Amos-Landgraf J."/>
            <person name="Schwartz D.C."/>
            <person name="Cheng Z."/>
            <person name="Lindblad-Toh K."/>
            <person name="Eichler E.E."/>
            <person name="Ponting C.P."/>
        </authorList>
    </citation>
    <scope>NUCLEOTIDE SEQUENCE [LARGE SCALE GENOMIC DNA]</scope>
    <source>
        <strain>C57BL/6J</strain>
    </source>
</reference>
<reference key="4">
    <citation type="journal article" date="2004" name="Genome Res.">
        <title>The status, quality, and expansion of the NIH full-length cDNA project: the Mammalian Gene Collection (MGC).</title>
        <authorList>
            <consortium name="The MGC Project Team"/>
        </authorList>
    </citation>
    <scope>NUCLEOTIDE SEQUENCE [LARGE SCALE MRNA]</scope>
    <source>
        <strain>FVB/N</strain>
        <tissue>Liver</tissue>
    </source>
</reference>
<reference key="5">
    <citation type="journal article" date="2007" name="Proc. Natl. Acad. Sci. U.S.A.">
        <title>Large-scale phosphorylation analysis of mouse liver.</title>
        <authorList>
            <person name="Villen J."/>
            <person name="Beausoleil S.A."/>
            <person name="Gerber S.A."/>
            <person name="Gygi S.P."/>
        </authorList>
    </citation>
    <scope>PHOSPHORYLATION [LARGE SCALE ANALYSIS] AT SER-261</scope>
    <scope>IDENTIFICATION BY MASS SPECTROMETRY [LARGE SCALE ANALYSIS]</scope>
    <source>
        <tissue>Liver</tissue>
    </source>
</reference>
<reference key="6">
    <citation type="journal article" date="2008" name="Proc. Natl. Acad. Sci. U.S.A.">
        <title>A catechol-O-methyltransferase that is essential for auditory function in mice and humans.</title>
        <authorList>
            <person name="Du X."/>
            <person name="Schwander M."/>
            <person name="Moresco E.M.Y."/>
            <person name="Viviani P."/>
            <person name="Haller C."/>
            <person name="Hildebrand M.S."/>
            <person name="Pak K."/>
            <person name="Tarantino L."/>
            <person name="Roberts A."/>
            <person name="Richardson H."/>
            <person name="Koob G."/>
            <person name="Najmabadi H."/>
            <person name="Ryan A.F."/>
            <person name="Smith R.J.H."/>
            <person name="Mueller U."/>
            <person name="Beutler B."/>
        </authorList>
    </citation>
    <scope>MUTAGENESIS OF ARG-51</scope>
    <scope>FUNCTION</scope>
</reference>
<reference key="7">
    <citation type="journal article" date="2009" name="Immunity">
        <title>The phagosomal proteome in interferon-gamma-activated macrophages.</title>
        <authorList>
            <person name="Trost M."/>
            <person name="English L."/>
            <person name="Lemieux S."/>
            <person name="Courcelles M."/>
            <person name="Desjardins M."/>
            <person name="Thibault P."/>
        </authorList>
    </citation>
    <scope>IDENTIFICATION BY MASS SPECTROMETRY [LARGE SCALE ANALYSIS]</scope>
</reference>
<reference key="8">
    <citation type="journal article" date="2009" name="Mol. Cell. Proteomics">
        <title>Large scale localization of protein phosphorylation by use of electron capture dissociation mass spectrometry.</title>
        <authorList>
            <person name="Sweet S.M."/>
            <person name="Bailey C.M."/>
            <person name="Cunningham D.L."/>
            <person name="Heath J.K."/>
            <person name="Cooper H.J."/>
        </authorList>
    </citation>
    <scope>PHOSPHORYLATION [LARGE SCALE ANALYSIS] AT SER-261</scope>
    <scope>IDENTIFICATION BY MASS SPECTROMETRY [LARGE SCALE ANALYSIS]</scope>
    <source>
        <tissue>Embryonic fibroblast</tissue>
    </source>
</reference>
<reference key="9">
    <citation type="journal article" date="2010" name="Cell">
        <title>A tissue-specific atlas of mouse protein phosphorylation and expression.</title>
        <authorList>
            <person name="Huttlin E.L."/>
            <person name="Jedrychowski M.P."/>
            <person name="Elias J.E."/>
            <person name="Goswami T."/>
            <person name="Rad R."/>
            <person name="Beausoleil S.A."/>
            <person name="Villen J."/>
            <person name="Haas W."/>
            <person name="Sowa M.E."/>
            <person name="Gygi S.P."/>
        </authorList>
    </citation>
    <scope>PHOSPHORYLATION [LARGE SCALE ANALYSIS] AT SER-261</scope>
    <scope>IDENTIFICATION BY MASS SPECTROMETRY [LARGE SCALE ANALYSIS]</scope>
    <source>
        <tissue>Brain</tissue>
        <tissue>Brown adipose tissue</tissue>
        <tissue>Heart</tissue>
        <tissue>Kidney</tissue>
        <tissue>Liver</tissue>
        <tissue>Lung</tissue>
        <tissue>Pancreas</tissue>
        <tissue>Spleen</tissue>
        <tissue>Testis</tissue>
    </source>
</reference>